<accession>A1AP52</accession>
<evidence type="ECO:0000255" key="1">
    <source>
        <dbReference type="HAMAP-Rule" id="MF_01347"/>
    </source>
</evidence>
<sequence>MSQNTGKITQVIGAVVDVEFEPGKLPEIYHALRVTNPAINDSENNLVLEVAQHLGENSVRTIAMDSTDGLKRGQAVLDTGKQICAPVGKKTLGRIINVIGEPVDEMGPIGNDKENPIHREAPPFEDQSTKVEAFTTGIKVVDLLAPYARGGKIGLFGGAGVGKTVLIMELINNIARQHGGFSVFAGVGERTREGNDLWMEMKETGVLEKTALVYGQMNEPPGARARVALTALSIAEHFRDDEGLDVLLFIDNIFRFTQAGSEVSALLGRIPSAVGYQPTLATEMGELQERITSTKNGSITSVQAIYVPADDLTDPAPATAFAHLDATTVLSRQIAELGIYPAVDPLDSTSRILDPQIIGEEHYAIARQVQYILQKYKDLQDIIAILGMDELSEEDKLIVARARKIQRFLSQPFFVAEVFTGSPGKYVELKDTIKGFQEIVSGKHDHLPEQAFYMVGSIEEAVEKAAKLAAV</sequence>
<reference key="1">
    <citation type="submission" date="2006-10" db="EMBL/GenBank/DDBJ databases">
        <title>Complete sequence of chromosome of Pelobacter propionicus DSM 2379.</title>
        <authorList>
            <consortium name="US DOE Joint Genome Institute"/>
            <person name="Copeland A."/>
            <person name="Lucas S."/>
            <person name="Lapidus A."/>
            <person name="Barry K."/>
            <person name="Detter J.C."/>
            <person name="Glavina del Rio T."/>
            <person name="Hammon N."/>
            <person name="Israni S."/>
            <person name="Dalin E."/>
            <person name="Tice H."/>
            <person name="Pitluck S."/>
            <person name="Saunders E."/>
            <person name="Brettin T."/>
            <person name="Bruce D."/>
            <person name="Han C."/>
            <person name="Tapia R."/>
            <person name="Schmutz J."/>
            <person name="Larimer F."/>
            <person name="Land M."/>
            <person name="Hauser L."/>
            <person name="Kyrpides N."/>
            <person name="Kim E."/>
            <person name="Lovley D."/>
            <person name="Richardson P."/>
        </authorList>
    </citation>
    <scope>NUCLEOTIDE SEQUENCE [LARGE SCALE GENOMIC DNA]</scope>
    <source>
        <strain>DSM 2379 / NBRC 103807 / OttBd1</strain>
    </source>
</reference>
<keyword id="KW-0066">ATP synthesis</keyword>
<keyword id="KW-0067">ATP-binding</keyword>
<keyword id="KW-0997">Cell inner membrane</keyword>
<keyword id="KW-1003">Cell membrane</keyword>
<keyword id="KW-0139">CF(1)</keyword>
<keyword id="KW-0375">Hydrogen ion transport</keyword>
<keyword id="KW-0406">Ion transport</keyword>
<keyword id="KW-0472">Membrane</keyword>
<keyword id="KW-0547">Nucleotide-binding</keyword>
<keyword id="KW-1185">Reference proteome</keyword>
<keyword id="KW-1278">Translocase</keyword>
<keyword id="KW-0813">Transport</keyword>
<feature type="chain" id="PRO_0000339565" description="ATP synthase subunit beta 2">
    <location>
        <begin position="1"/>
        <end position="471"/>
    </location>
</feature>
<feature type="binding site" evidence="1">
    <location>
        <begin position="157"/>
        <end position="164"/>
    </location>
    <ligand>
        <name>ATP</name>
        <dbReference type="ChEBI" id="CHEBI:30616"/>
    </ligand>
</feature>
<name>ATPB2_PELPD</name>
<dbReference type="EC" id="7.1.2.2" evidence="1"/>
<dbReference type="EMBL" id="CP000482">
    <property type="protein sequence ID" value="ABK99122.1"/>
    <property type="molecule type" value="Genomic_DNA"/>
</dbReference>
<dbReference type="RefSeq" id="WP_011735412.1">
    <property type="nucleotide sequence ID" value="NC_008609.1"/>
</dbReference>
<dbReference type="SMR" id="A1AP52"/>
<dbReference type="STRING" id="338966.Ppro_1507"/>
<dbReference type="KEGG" id="ppd:Ppro_1507"/>
<dbReference type="eggNOG" id="COG0055">
    <property type="taxonomic scope" value="Bacteria"/>
</dbReference>
<dbReference type="HOGENOM" id="CLU_022398_0_2_7"/>
<dbReference type="OrthoDB" id="9801639at2"/>
<dbReference type="Proteomes" id="UP000006732">
    <property type="component" value="Chromosome"/>
</dbReference>
<dbReference type="GO" id="GO:0005886">
    <property type="term" value="C:plasma membrane"/>
    <property type="evidence" value="ECO:0007669"/>
    <property type="project" value="UniProtKB-SubCell"/>
</dbReference>
<dbReference type="GO" id="GO:0045259">
    <property type="term" value="C:proton-transporting ATP synthase complex"/>
    <property type="evidence" value="ECO:0007669"/>
    <property type="project" value="UniProtKB-KW"/>
</dbReference>
<dbReference type="GO" id="GO:0005524">
    <property type="term" value="F:ATP binding"/>
    <property type="evidence" value="ECO:0007669"/>
    <property type="project" value="UniProtKB-UniRule"/>
</dbReference>
<dbReference type="GO" id="GO:0016887">
    <property type="term" value="F:ATP hydrolysis activity"/>
    <property type="evidence" value="ECO:0007669"/>
    <property type="project" value="InterPro"/>
</dbReference>
<dbReference type="GO" id="GO:0046933">
    <property type="term" value="F:proton-transporting ATP synthase activity, rotational mechanism"/>
    <property type="evidence" value="ECO:0007669"/>
    <property type="project" value="UniProtKB-UniRule"/>
</dbReference>
<dbReference type="CDD" id="cd18110">
    <property type="entry name" value="ATP-synt_F1_beta_C"/>
    <property type="match status" value="1"/>
</dbReference>
<dbReference type="CDD" id="cd18115">
    <property type="entry name" value="ATP-synt_F1_beta_N"/>
    <property type="match status" value="1"/>
</dbReference>
<dbReference type="CDD" id="cd01133">
    <property type="entry name" value="F1-ATPase_beta_CD"/>
    <property type="match status" value="1"/>
</dbReference>
<dbReference type="FunFam" id="1.10.1140.10:FF:000001">
    <property type="entry name" value="ATP synthase subunit beta"/>
    <property type="match status" value="1"/>
</dbReference>
<dbReference type="FunFam" id="2.40.10.170:FF:000005">
    <property type="entry name" value="ATP synthase subunit beta"/>
    <property type="match status" value="1"/>
</dbReference>
<dbReference type="FunFam" id="3.40.50.300:FF:000026">
    <property type="entry name" value="ATP synthase subunit beta"/>
    <property type="match status" value="1"/>
</dbReference>
<dbReference type="Gene3D" id="2.40.10.170">
    <property type="match status" value="1"/>
</dbReference>
<dbReference type="Gene3D" id="1.10.1140.10">
    <property type="entry name" value="Bovine Mitochondrial F1-atpase, Atp Synthase Beta Chain, Chain D, domain 3"/>
    <property type="match status" value="1"/>
</dbReference>
<dbReference type="Gene3D" id="3.40.50.300">
    <property type="entry name" value="P-loop containing nucleotide triphosphate hydrolases"/>
    <property type="match status" value="1"/>
</dbReference>
<dbReference type="HAMAP" id="MF_01347">
    <property type="entry name" value="ATP_synth_beta_bact"/>
    <property type="match status" value="1"/>
</dbReference>
<dbReference type="InterPro" id="IPR003593">
    <property type="entry name" value="AAA+_ATPase"/>
</dbReference>
<dbReference type="InterPro" id="IPR055190">
    <property type="entry name" value="ATP-synt_VA_C"/>
</dbReference>
<dbReference type="InterPro" id="IPR005722">
    <property type="entry name" value="ATP_synth_F1_bsu"/>
</dbReference>
<dbReference type="InterPro" id="IPR020003">
    <property type="entry name" value="ATPase_a/bsu_AS"/>
</dbReference>
<dbReference type="InterPro" id="IPR050053">
    <property type="entry name" value="ATPase_alpha/beta_chains"/>
</dbReference>
<dbReference type="InterPro" id="IPR004100">
    <property type="entry name" value="ATPase_F1/V1/A1_a/bsu_N"/>
</dbReference>
<dbReference type="InterPro" id="IPR036121">
    <property type="entry name" value="ATPase_F1/V1/A1_a/bsu_N_sf"/>
</dbReference>
<dbReference type="InterPro" id="IPR000194">
    <property type="entry name" value="ATPase_F1/V1/A1_a/bsu_nucl-bd"/>
</dbReference>
<dbReference type="InterPro" id="IPR024034">
    <property type="entry name" value="ATPase_F1/V1_b/a_C"/>
</dbReference>
<dbReference type="InterPro" id="IPR027417">
    <property type="entry name" value="P-loop_NTPase"/>
</dbReference>
<dbReference type="NCBIfam" id="TIGR01039">
    <property type="entry name" value="atpD"/>
    <property type="match status" value="1"/>
</dbReference>
<dbReference type="PANTHER" id="PTHR15184">
    <property type="entry name" value="ATP SYNTHASE"/>
    <property type="match status" value="1"/>
</dbReference>
<dbReference type="PANTHER" id="PTHR15184:SF71">
    <property type="entry name" value="ATP SYNTHASE SUBUNIT BETA, MITOCHONDRIAL"/>
    <property type="match status" value="1"/>
</dbReference>
<dbReference type="Pfam" id="PF00006">
    <property type="entry name" value="ATP-synt_ab"/>
    <property type="match status" value="1"/>
</dbReference>
<dbReference type="Pfam" id="PF02874">
    <property type="entry name" value="ATP-synt_ab_N"/>
    <property type="match status" value="1"/>
</dbReference>
<dbReference type="Pfam" id="PF22919">
    <property type="entry name" value="ATP-synt_VA_C"/>
    <property type="match status" value="1"/>
</dbReference>
<dbReference type="PIRSF" id="PIRSF039072">
    <property type="entry name" value="ATPase_subunit_beta"/>
    <property type="match status" value="1"/>
</dbReference>
<dbReference type="SMART" id="SM00382">
    <property type="entry name" value="AAA"/>
    <property type="match status" value="1"/>
</dbReference>
<dbReference type="SUPFAM" id="SSF47917">
    <property type="entry name" value="C-terminal domain of alpha and beta subunits of F1 ATP synthase"/>
    <property type="match status" value="1"/>
</dbReference>
<dbReference type="SUPFAM" id="SSF50615">
    <property type="entry name" value="N-terminal domain of alpha and beta subunits of F1 ATP synthase"/>
    <property type="match status" value="1"/>
</dbReference>
<dbReference type="SUPFAM" id="SSF52540">
    <property type="entry name" value="P-loop containing nucleoside triphosphate hydrolases"/>
    <property type="match status" value="1"/>
</dbReference>
<dbReference type="PROSITE" id="PS00152">
    <property type="entry name" value="ATPASE_ALPHA_BETA"/>
    <property type="match status" value="1"/>
</dbReference>
<comment type="function">
    <text evidence="1">Produces ATP from ADP in the presence of a proton gradient across the membrane. The catalytic sites are hosted primarily by the beta subunits.</text>
</comment>
<comment type="catalytic activity">
    <reaction evidence="1">
        <text>ATP + H2O + 4 H(+)(in) = ADP + phosphate + 5 H(+)(out)</text>
        <dbReference type="Rhea" id="RHEA:57720"/>
        <dbReference type="ChEBI" id="CHEBI:15377"/>
        <dbReference type="ChEBI" id="CHEBI:15378"/>
        <dbReference type="ChEBI" id="CHEBI:30616"/>
        <dbReference type="ChEBI" id="CHEBI:43474"/>
        <dbReference type="ChEBI" id="CHEBI:456216"/>
        <dbReference type="EC" id="7.1.2.2"/>
    </reaction>
</comment>
<comment type="subunit">
    <text evidence="1">F-type ATPases have 2 components, CF(1) - the catalytic core - and CF(0) - the membrane proton channel. CF(1) has five subunits: alpha(3), beta(3), gamma(1), delta(1), epsilon(1). CF(0) has three main subunits: a(1), b(2) and c(9-12). The alpha and beta chains form an alternating ring which encloses part of the gamma chain. CF(1) is attached to CF(0) by a central stalk formed by the gamma and epsilon chains, while a peripheral stalk is formed by the delta and b chains.</text>
</comment>
<comment type="subcellular location">
    <subcellularLocation>
        <location evidence="1">Cell inner membrane</location>
        <topology evidence="1">Peripheral membrane protein</topology>
    </subcellularLocation>
</comment>
<comment type="similarity">
    <text evidence="1">Belongs to the ATPase alpha/beta chains family.</text>
</comment>
<protein>
    <recommendedName>
        <fullName evidence="1">ATP synthase subunit beta 2</fullName>
        <ecNumber evidence="1">7.1.2.2</ecNumber>
    </recommendedName>
    <alternativeName>
        <fullName evidence="1">ATP synthase F1 sector subunit beta 2</fullName>
    </alternativeName>
    <alternativeName>
        <fullName evidence="1">F-ATPase subunit beta 2</fullName>
    </alternativeName>
</protein>
<organism>
    <name type="scientific">Pelobacter propionicus (strain DSM 2379 / NBRC 103807 / OttBd1)</name>
    <dbReference type="NCBI Taxonomy" id="338966"/>
    <lineage>
        <taxon>Bacteria</taxon>
        <taxon>Pseudomonadati</taxon>
        <taxon>Thermodesulfobacteriota</taxon>
        <taxon>Desulfuromonadia</taxon>
        <taxon>Desulfuromonadales</taxon>
        <taxon>Desulfuromonadaceae</taxon>
        <taxon>Pelobacter</taxon>
    </lineage>
</organism>
<gene>
    <name evidence="1" type="primary">atpD2</name>
    <name type="ordered locus">Ppro_1507</name>
</gene>
<proteinExistence type="inferred from homology"/>